<keyword id="KW-0238">DNA-binding</keyword>
<keyword id="KW-0539">Nucleus</keyword>
<keyword id="KW-0677">Repeat</keyword>
<keyword id="KW-0804">Transcription</keyword>
<protein>
    <recommendedName>
        <fullName>TATA-box-binding protein</fullName>
    </recommendedName>
    <alternativeName>
        <fullName>TATA sequence-binding protein</fullName>
        <shortName>TBP</shortName>
    </alternativeName>
    <alternativeName>
        <fullName>TATA-binding factor</fullName>
    </alternativeName>
    <alternativeName>
        <fullName>TATA-box factor</fullName>
    </alternativeName>
    <alternativeName>
        <fullName>Transcription initiation factor TFIID TBP subunit</fullName>
    </alternativeName>
</protein>
<feature type="chain" id="PRO_0000153969" description="TATA-box-binding protein">
    <location>
        <begin position="1"/>
        <end position="258"/>
    </location>
</feature>
<feature type="repeat" description="1">
    <location>
        <begin position="85"/>
        <end position="161"/>
    </location>
</feature>
<feature type="repeat" description="2">
    <location>
        <begin position="175"/>
        <end position="252"/>
    </location>
</feature>
<feature type="region of interest" description="Disordered" evidence="1">
    <location>
        <begin position="19"/>
        <end position="80"/>
    </location>
</feature>
<organism>
    <name type="scientific">Acanthamoeba castellanii</name>
    <name type="common">Amoeba</name>
    <dbReference type="NCBI Taxonomy" id="5755"/>
    <lineage>
        <taxon>Eukaryota</taxon>
        <taxon>Amoebozoa</taxon>
        <taxon>Discosea</taxon>
        <taxon>Longamoebia</taxon>
        <taxon>Centramoebida</taxon>
        <taxon>Acanthamoebidae</taxon>
        <taxon>Acanthamoeba</taxon>
    </lineage>
</organism>
<dbReference type="EMBL" id="X63133">
    <property type="protein sequence ID" value="CAA44843.1"/>
    <property type="molecule type" value="mRNA"/>
</dbReference>
<dbReference type="EMBL" id="M93340">
    <property type="protein sequence ID" value="AAA27712.1"/>
    <property type="molecule type" value="Genomic_DNA"/>
</dbReference>
<dbReference type="EMBL" id="M87493">
    <property type="protein sequence ID" value="AAA27713.1"/>
    <property type="molecule type" value="mRNA"/>
</dbReference>
<dbReference type="PIR" id="JQ1666">
    <property type="entry name" value="JQ1666"/>
</dbReference>
<dbReference type="SMR" id="P26354"/>
<dbReference type="VEuPathDB" id="AmoebaDB:ACA1_020820"/>
<dbReference type="OMA" id="NCEYEPE"/>
<dbReference type="GO" id="GO:0005634">
    <property type="term" value="C:nucleus"/>
    <property type="evidence" value="ECO:0007669"/>
    <property type="project" value="UniProtKB-SubCell"/>
</dbReference>
<dbReference type="GO" id="GO:0003677">
    <property type="term" value="F:DNA binding"/>
    <property type="evidence" value="ECO:0007669"/>
    <property type="project" value="UniProtKB-KW"/>
</dbReference>
<dbReference type="GO" id="GO:0006352">
    <property type="term" value="P:DNA-templated transcription initiation"/>
    <property type="evidence" value="ECO:0007669"/>
    <property type="project" value="InterPro"/>
</dbReference>
<dbReference type="CDD" id="cd04516">
    <property type="entry name" value="TBP_eukaryotes"/>
    <property type="match status" value="1"/>
</dbReference>
<dbReference type="FunFam" id="3.30.310.10:FF:000001">
    <property type="entry name" value="TATA-box-binding protein 2"/>
    <property type="match status" value="1"/>
</dbReference>
<dbReference type="FunFam" id="3.30.310.10:FF:000002">
    <property type="entry name" value="TATA-box-binding protein 2"/>
    <property type="match status" value="1"/>
</dbReference>
<dbReference type="Gene3D" id="3.30.310.10">
    <property type="entry name" value="TATA-Binding Protein"/>
    <property type="match status" value="2"/>
</dbReference>
<dbReference type="HAMAP" id="MF_00408">
    <property type="entry name" value="TATA_bind_prot_arch"/>
    <property type="match status" value="1"/>
</dbReference>
<dbReference type="InterPro" id="IPR000814">
    <property type="entry name" value="TBP"/>
</dbReference>
<dbReference type="InterPro" id="IPR030491">
    <property type="entry name" value="TBP_CS"/>
</dbReference>
<dbReference type="InterPro" id="IPR012295">
    <property type="entry name" value="TBP_dom_sf"/>
</dbReference>
<dbReference type="InterPro" id="IPR033710">
    <property type="entry name" value="TBP_eukaryotic"/>
</dbReference>
<dbReference type="PANTHER" id="PTHR10126">
    <property type="entry name" value="TATA-BOX BINDING PROTEIN"/>
    <property type="match status" value="1"/>
</dbReference>
<dbReference type="Pfam" id="PF00352">
    <property type="entry name" value="TBP"/>
    <property type="match status" value="2"/>
</dbReference>
<dbReference type="PRINTS" id="PR00686">
    <property type="entry name" value="TIFACTORIID"/>
</dbReference>
<dbReference type="SUPFAM" id="SSF55945">
    <property type="entry name" value="TATA-box binding protein-like"/>
    <property type="match status" value="2"/>
</dbReference>
<dbReference type="PROSITE" id="PS00351">
    <property type="entry name" value="TFIID"/>
    <property type="match status" value="2"/>
</dbReference>
<sequence>MSGITLPSLTNVLQSAGMAVHGHPSAPGSTQLPPLHQLNISSQPSSQPPQPSLQYSEPAQSTAASDDMDSDVDRTKHPSGIVPTLQNIVSTVNLGCKLDLKNIALHARNAEYNPKRFAAVIMRIREPKTTALIFASGKMVCTGAKSEEASRLAARKYARIIQKLGFAAKFLDFKIQNIVGSCDVRFPIRLEGLAFAHNHYCSYEPELFPGLIYRMVQPKIVLLIFVSGKIVLTGAKVREEIYEAFENIYPVLTEYKKT</sequence>
<accession>P26354</accession>
<gene>
    <name type="primary">TFIID</name>
</gene>
<reference key="1">
    <citation type="journal article" date="1992" name="Nucleic Acids Res.">
        <title>Isolation of genomic DNA encoding transcription factor TFIID from Acanthamoeba castellanii: characterization of the promoter.</title>
        <authorList>
            <person name="Wong J.M."/>
            <person name="Liu F."/>
            <person name="Bateman E."/>
        </authorList>
    </citation>
    <scope>NUCLEOTIDE SEQUENCE [GENOMIC DNA]</scope>
    <source>
        <strain>ATCC 30010 / Neff</strain>
    </source>
</reference>
<reference key="2">
    <citation type="journal article" date="1992" name="Gene">
        <title>Cloning and expression of the Acanthamoeba castellanii gene encoding transcription factor TFIID.</title>
        <authorList>
            <person name="Wong J.M."/>
            <person name="Liu F."/>
            <person name="Bateman E."/>
        </authorList>
    </citation>
    <scope>NUCLEOTIDE SEQUENCE [MRNA]</scope>
    <source>
        <strain>ATCC 30010 / Neff</strain>
    </source>
</reference>
<comment type="function">
    <text>General transcription factor that functions at the core of the DNA-binding multiprotein factor TFIID. Binding of TFIID to the TATA box is the initial transcriptional step of the pre-initiation complex (PIC), playing a role in the activation of eukaryotic genes transcribed by RNA polymerase II.</text>
</comment>
<comment type="subunit">
    <text>Belongs to the TFIID complex together with the TBP-associated factors (TAFs). Binds DNA as monomer.</text>
</comment>
<comment type="subcellular location">
    <subcellularLocation>
        <location>Nucleus</location>
    </subcellularLocation>
</comment>
<comment type="similarity">
    <text evidence="2">Belongs to the TBP family.</text>
</comment>
<evidence type="ECO:0000256" key="1">
    <source>
        <dbReference type="SAM" id="MobiDB-lite"/>
    </source>
</evidence>
<evidence type="ECO:0000305" key="2"/>
<name>TBP_ACACA</name>
<proteinExistence type="evidence at transcript level"/>